<keyword id="KW-0238">DNA-binding</keyword>
<keyword id="KW-0539">Nucleus</keyword>
<keyword id="KW-1185">Reference proteome</keyword>
<keyword id="KW-0804">Transcription</keyword>
<keyword id="KW-0805">Transcription regulation</keyword>
<sequence>MYHHSPFYPHHLQTGEQDLDMERENDMDQNSKNSTQKPVKREKRRYRCRKRSPATIERAKTVRRDKANARERRRMNSLNDALEHLRGILPALPDEPKMTKIETLRKAQEYIASLSFQLSGGSPDSSQCCETGSCGLCSASQSLQSTPFQSPCFPQPLQYPSSYSNPPSQMYYHHHHQSPSFPHH</sequence>
<gene>
    <name evidence="9" type="primary">ngn-1</name>
    <name evidence="9" type="ORF">Y69A2AR.29</name>
</gene>
<accession>Q95XG7</accession>
<organism evidence="8">
    <name type="scientific">Caenorhabditis elegans</name>
    <dbReference type="NCBI Taxonomy" id="6239"/>
    <lineage>
        <taxon>Eukaryota</taxon>
        <taxon>Metazoa</taxon>
        <taxon>Ecdysozoa</taxon>
        <taxon>Nematoda</taxon>
        <taxon>Chromadorea</taxon>
        <taxon>Rhabditida</taxon>
        <taxon>Rhabditina</taxon>
        <taxon>Rhabditomorpha</taxon>
        <taxon>Rhabditoidea</taxon>
        <taxon>Rhabditidae</taxon>
        <taxon>Peloderinae</taxon>
        <taxon>Caenorhabditis</taxon>
    </lineage>
</organism>
<protein>
    <recommendedName>
        <fullName evidence="7">Helix-loop-helix protein ngn-1</fullName>
    </recommendedName>
</protein>
<name>NGN1_CAEEL</name>
<dbReference type="EMBL" id="BX284604">
    <property type="protein sequence ID" value="CCD74131.1"/>
    <property type="molecule type" value="Genomic_DNA"/>
</dbReference>
<dbReference type="RefSeq" id="NP_500236.1">
    <property type="nucleotide sequence ID" value="NM_067835.5"/>
</dbReference>
<dbReference type="SMR" id="Q95XG7"/>
<dbReference type="FunCoup" id="Q95XG7">
    <property type="interactions" value="183"/>
</dbReference>
<dbReference type="IntAct" id="Q95XG7">
    <property type="interactions" value="2"/>
</dbReference>
<dbReference type="STRING" id="6239.Y69A2AR.29.1"/>
<dbReference type="PaxDb" id="6239-Y69A2AR.29"/>
<dbReference type="EnsemblMetazoa" id="Y69A2AR.29.1">
    <property type="protein sequence ID" value="Y69A2AR.29.1"/>
    <property type="gene ID" value="WBGene00003595"/>
</dbReference>
<dbReference type="GeneID" id="177045"/>
<dbReference type="KEGG" id="cel:CELE_Y69A2AR.29"/>
<dbReference type="UCSC" id="Y69A2AR.29">
    <property type="organism name" value="c. elegans"/>
</dbReference>
<dbReference type="AGR" id="WB:WBGene00003595"/>
<dbReference type="CTD" id="177045"/>
<dbReference type="WormBase" id="Y69A2AR.29">
    <property type="protein sequence ID" value="CE26560"/>
    <property type="gene ID" value="WBGene00003595"/>
    <property type="gene designation" value="ngn-1"/>
</dbReference>
<dbReference type="eggNOG" id="KOG3898">
    <property type="taxonomic scope" value="Eukaryota"/>
</dbReference>
<dbReference type="GeneTree" id="ENSGT00940000169303"/>
<dbReference type="HOGENOM" id="CLU_115553_0_0_1"/>
<dbReference type="InParanoid" id="Q95XG7"/>
<dbReference type="OMA" id="TPFQSPC"/>
<dbReference type="OrthoDB" id="5969565at2759"/>
<dbReference type="PhylomeDB" id="Q95XG7"/>
<dbReference type="PRO" id="PR:Q95XG7"/>
<dbReference type="Proteomes" id="UP000001940">
    <property type="component" value="Chromosome IV"/>
</dbReference>
<dbReference type="Bgee" id="WBGene00003595">
    <property type="expression patterns" value="Expressed in pharyngeal muscle cell (C elegans) and 3 other cell types or tissues"/>
</dbReference>
<dbReference type="GO" id="GO:0005634">
    <property type="term" value="C:nucleus"/>
    <property type="evidence" value="ECO:0000318"/>
    <property type="project" value="GO_Central"/>
</dbReference>
<dbReference type="GO" id="GO:0000981">
    <property type="term" value="F:DNA-binding transcription factor activity, RNA polymerase II-specific"/>
    <property type="evidence" value="ECO:0000318"/>
    <property type="project" value="GO_Central"/>
</dbReference>
<dbReference type="GO" id="GO:0070888">
    <property type="term" value="F:E-box binding"/>
    <property type="evidence" value="ECO:0000318"/>
    <property type="project" value="GO_Central"/>
</dbReference>
<dbReference type="GO" id="GO:0046983">
    <property type="term" value="F:protein dimerization activity"/>
    <property type="evidence" value="ECO:0007669"/>
    <property type="project" value="InterPro"/>
</dbReference>
<dbReference type="GO" id="GO:0009653">
    <property type="term" value="P:anatomical structure morphogenesis"/>
    <property type="evidence" value="ECO:0000315"/>
    <property type="project" value="UniProtKB"/>
</dbReference>
<dbReference type="GO" id="GO:0061564">
    <property type="term" value="P:axon development"/>
    <property type="evidence" value="ECO:0000315"/>
    <property type="project" value="UniProtKB"/>
</dbReference>
<dbReference type="GO" id="GO:0014014">
    <property type="term" value="P:negative regulation of gliogenesis"/>
    <property type="evidence" value="ECO:0000315"/>
    <property type="project" value="UniProtKB"/>
</dbReference>
<dbReference type="GO" id="GO:0045944">
    <property type="term" value="P:positive regulation of transcription by RNA polymerase II"/>
    <property type="evidence" value="ECO:0000315"/>
    <property type="project" value="UniProtKB"/>
</dbReference>
<dbReference type="GO" id="GO:0007423">
    <property type="term" value="P:sensory organ development"/>
    <property type="evidence" value="ECO:0000318"/>
    <property type="project" value="GO_Central"/>
</dbReference>
<dbReference type="Gene3D" id="4.10.280.10">
    <property type="entry name" value="Helix-loop-helix DNA-binding domain"/>
    <property type="match status" value="1"/>
</dbReference>
<dbReference type="InterPro" id="IPR011598">
    <property type="entry name" value="bHLH_dom"/>
</dbReference>
<dbReference type="InterPro" id="IPR050359">
    <property type="entry name" value="bHLH_transcription_factors"/>
</dbReference>
<dbReference type="InterPro" id="IPR036638">
    <property type="entry name" value="HLH_DNA-bd_sf"/>
</dbReference>
<dbReference type="PANTHER" id="PTHR19290:SF163">
    <property type="entry name" value="BASIC HELIX-LOOP-HELIX NEURAL TRANSCRIPTION FACTOR TAP"/>
    <property type="match status" value="1"/>
</dbReference>
<dbReference type="PANTHER" id="PTHR19290">
    <property type="entry name" value="BASIC HELIX-LOOP-HELIX PROTEIN NEUROGENIN-RELATED"/>
    <property type="match status" value="1"/>
</dbReference>
<dbReference type="Pfam" id="PF00010">
    <property type="entry name" value="HLH"/>
    <property type="match status" value="1"/>
</dbReference>
<dbReference type="SMART" id="SM00353">
    <property type="entry name" value="HLH"/>
    <property type="match status" value="1"/>
</dbReference>
<dbReference type="SUPFAM" id="SSF47459">
    <property type="entry name" value="HLH, helix-loop-helix DNA-binding domain"/>
    <property type="match status" value="1"/>
</dbReference>
<dbReference type="PROSITE" id="PS50888">
    <property type="entry name" value="BHLH"/>
    <property type="match status" value="1"/>
</dbReference>
<evidence type="ECO:0000250" key="1">
    <source>
        <dbReference type="UniProtKB" id="Q9Y4Z2"/>
    </source>
</evidence>
<evidence type="ECO:0000255" key="2">
    <source>
        <dbReference type="PROSITE-ProRule" id="PRU00981"/>
    </source>
</evidence>
<evidence type="ECO:0000256" key="3">
    <source>
        <dbReference type="SAM" id="MobiDB-lite"/>
    </source>
</evidence>
<evidence type="ECO:0000269" key="4">
    <source>
    </source>
</evidence>
<evidence type="ECO:0000269" key="5">
    <source>
    </source>
</evidence>
<evidence type="ECO:0000269" key="6">
    <source>
    </source>
</evidence>
<evidence type="ECO:0000305" key="7"/>
<evidence type="ECO:0000312" key="8">
    <source>
        <dbReference type="Proteomes" id="UP000001940"/>
    </source>
</evidence>
<evidence type="ECO:0000312" key="9">
    <source>
        <dbReference type="WormBase" id="Y69A2AR.29"/>
    </source>
</evidence>
<feature type="chain" id="PRO_0000453175" description="Helix-loop-helix protein ngn-1">
    <location>
        <begin position="1"/>
        <end position="184"/>
    </location>
</feature>
<feature type="domain" description="bHLH" evidence="2">
    <location>
        <begin position="62"/>
        <end position="114"/>
    </location>
</feature>
<feature type="region of interest" description="Disordered" evidence="3">
    <location>
        <begin position="1"/>
        <end position="55"/>
    </location>
</feature>
<feature type="region of interest" description="Basic motif" evidence="2">
    <location>
        <begin position="62"/>
        <end position="75"/>
    </location>
</feature>
<feature type="region of interest" description="Helix-loop-helix motif" evidence="2">
    <location>
        <begin position="76"/>
        <end position="114"/>
    </location>
</feature>
<feature type="region of interest" description="Disordered" evidence="3">
    <location>
        <begin position="164"/>
        <end position="184"/>
    </location>
</feature>
<feature type="compositionally biased region" description="Polar residues" evidence="3">
    <location>
        <begin position="28"/>
        <end position="37"/>
    </location>
</feature>
<feature type="compositionally biased region" description="Basic residues" evidence="3">
    <location>
        <begin position="38"/>
        <end position="52"/>
    </location>
</feature>
<feature type="compositionally biased region" description="Basic residues" evidence="3">
    <location>
        <begin position="172"/>
        <end position="184"/>
    </location>
</feature>
<proteinExistence type="evidence at protein level"/>
<comment type="function">
    <text evidence="1 4 5 6">Acts as a transcriptional regulator (By similarity). Regulates expression of various genes, including homeobox protein unc-42 and helix-loop-helix protein hlh-34 (PubMed:32273286). Required for embryonic viability, neuromuscular development, organization of the nerve ring and neuronal cell body location (PubMed:32273286). Regulates AIY neuron axon morphology and cell fate (PubMed:32273286). Plays a role in cell autonomously establishing a neuronal left-right asymmetry (PubMed:21041366). Involved in regulating glial specification (PubMed:32665354).</text>
</comment>
<comment type="subunit">
    <text evidence="4">Interacts with hlh-2; the interaction is direct.</text>
</comment>
<comment type="subcellular location">
    <subcellularLocation>
        <location evidence="2">Nucleus</location>
    </subcellularLocation>
</comment>
<comment type="developmental stage">
    <text evidence="4 5">Expressed in the early embryo in ABpra/p and MSpa/p cells, with weaker expression in ABar descendants (PubMed:32273286). Expressed left-right asymmetrically in the embryo, in the mother cell to the MI pharyngeal motorneuron but not the mother cell of the e3D epithelial cell (PubMed:21041366).</text>
</comment>
<reference evidence="8" key="1">
    <citation type="journal article" date="1998" name="Science">
        <title>Genome sequence of the nematode C. elegans: a platform for investigating biology.</title>
        <authorList>
            <consortium name="The C. elegans sequencing consortium"/>
        </authorList>
    </citation>
    <scope>NUCLEOTIDE SEQUENCE [LARGE SCALE GENOMIC DNA]</scope>
    <source>
        <strain evidence="8">Bristol N2</strain>
    </source>
</reference>
<reference evidence="7" key="2">
    <citation type="journal article" date="2010" name="Development">
        <title>Otx-dependent expression of proneural bHLH genes establishes a neuronal bilateral asymmetry in C. elegans.</title>
        <authorList>
            <person name="Nakano S."/>
            <person name="Ellis R.E."/>
            <person name="Horvitz H.R."/>
        </authorList>
    </citation>
    <scope>FUNCTION</scope>
    <scope>INTERACTION WITH HLH-2</scope>
    <scope>DEVELOPMENTAL STAGE</scope>
</reference>
<reference evidence="7" key="3">
    <citation type="journal article" date="2020" name="G3 (Bethesda)">
        <title>ngn-1/neurogenin Activates Transcription of Multiple Terminal Selector Transcription Factors in the Caenorhabditis elegans Nervous System.</title>
        <authorList>
            <person name="Christensen E.L."/>
            <person name="Beasley A."/>
            <person name="Radchuk J."/>
            <person name="Mielko Z.E."/>
            <person name="Preston E."/>
            <person name="Stuckett S."/>
            <person name="Murray J.I."/>
            <person name="Hudson M.L."/>
        </authorList>
    </citation>
    <scope>FUNCTION</scope>
    <scope>DEVELOPMENTAL STAGE</scope>
</reference>
<reference evidence="7" key="4">
    <citation type="journal article" date="2020" name="G3 (Bethesda)">
        <title>Regulation of Gliogenesis by lin-32/Atoh1 in Caenorhabditis elegans.</title>
        <authorList>
            <person name="Zhang A."/>
            <person name="Noma K."/>
            <person name="Yan D."/>
        </authorList>
    </citation>
    <scope>FUNCTION</scope>
</reference>